<comment type="function">
    <text evidence="1">Intracellular vesicle trafficking and protein transport.</text>
</comment>
<comment type="subunit">
    <text evidence="2">Interacts with XI-2/MYA2.</text>
</comment>
<comment type="interaction">
    <interactant intactId="EBI-2009559">
        <id>O49841</id>
    </interactant>
    <interactant intactId="EBI-2009528">
        <id>Q9LKB9</id>
        <label>XI-2</label>
    </interactant>
    <organismsDiffer>false</organismsDiffer>
    <experiments>3</experiments>
</comment>
<comment type="subcellular location">
    <subcellularLocation>
        <location evidence="3">Cell membrane</location>
        <topology evidence="3">Lipid-anchor</topology>
        <orientation evidence="3">Cytoplasmic side</orientation>
    </subcellularLocation>
    <subcellularLocation>
        <location evidence="2">Cytoplasm</location>
    </subcellularLocation>
    <text>Colocalizes with peroxisome.</text>
</comment>
<comment type="similarity">
    <text evidence="3">Belongs to the small GTPase superfamily. Rab family.</text>
</comment>
<protein>
    <recommendedName>
        <fullName>Ras-related protein RABC2a</fullName>
        <shortName>AtRABC2a</shortName>
    </recommendedName>
    <alternativeName>
        <fullName>Ras-related protein Rab18B</fullName>
        <shortName>AtRab18B</shortName>
    </alternativeName>
</protein>
<organism>
    <name type="scientific">Arabidopsis thaliana</name>
    <name type="common">Mouse-ear cress</name>
    <dbReference type="NCBI Taxonomy" id="3702"/>
    <lineage>
        <taxon>Eukaryota</taxon>
        <taxon>Viridiplantae</taxon>
        <taxon>Streptophyta</taxon>
        <taxon>Embryophyta</taxon>
        <taxon>Tracheophyta</taxon>
        <taxon>Spermatophyta</taxon>
        <taxon>Magnoliopsida</taxon>
        <taxon>eudicotyledons</taxon>
        <taxon>Gunneridae</taxon>
        <taxon>Pentapetalae</taxon>
        <taxon>rosids</taxon>
        <taxon>malvids</taxon>
        <taxon>Brassicales</taxon>
        <taxon>Brassicaceae</taxon>
        <taxon>Camelineae</taxon>
        <taxon>Arabidopsis</taxon>
    </lineage>
</organism>
<keyword id="KW-1003">Cell membrane</keyword>
<keyword id="KW-0963">Cytoplasm</keyword>
<keyword id="KW-0342">GTP-binding</keyword>
<keyword id="KW-0449">Lipoprotein</keyword>
<keyword id="KW-0472">Membrane</keyword>
<keyword id="KW-0547">Nucleotide-binding</keyword>
<keyword id="KW-0636">Prenylation</keyword>
<keyword id="KW-0653">Protein transport</keyword>
<keyword id="KW-1185">Reference proteome</keyword>
<keyword id="KW-0813">Transport</keyword>
<gene>
    <name type="primary">RABC2A</name>
    <name type="synonym">RAB18B</name>
    <name type="ordered locus">At5g03530</name>
    <name type="ORF">F12E4.310</name>
</gene>
<dbReference type="EMBL" id="D89824">
    <property type="protein sequence ID" value="BAA24074.1"/>
    <property type="molecule type" value="mRNA"/>
</dbReference>
<dbReference type="EMBL" id="AL162751">
    <property type="protein sequence ID" value="CAB83314.1"/>
    <property type="molecule type" value="Genomic_DNA"/>
</dbReference>
<dbReference type="EMBL" id="CP002688">
    <property type="protein sequence ID" value="AED90619.1"/>
    <property type="molecule type" value="Genomic_DNA"/>
</dbReference>
<dbReference type="EMBL" id="CP002688">
    <property type="protein sequence ID" value="ANM70568.1"/>
    <property type="molecule type" value="Genomic_DNA"/>
</dbReference>
<dbReference type="EMBL" id="AK119027">
    <property type="protein sequence ID" value="BAC43603.1"/>
    <property type="molecule type" value="mRNA"/>
</dbReference>
<dbReference type="EMBL" id="BT006101">
    <property type="protein sequence ID" value="AAP04086.1"/>
    <property type="molecule type" value="mRNA"/>
</dbReference>
<dbReference type="PIR" id="T48379">
    <property type="entry name" value="T48379"/>
</dbReference>
<dbReference type="RefSeq" id="NP_001332165.1">
    <property type="nucleotide sequence ID" value="NM_001342711.1"/>
</dbReference>
<dbReference type="RefSeq" id="NP_568121.1">
    <property type="nucleotide sequence ID" value="NM_120433.3"/>
</dbReference>
<dbReference type="SMR" id="O49841"/>
<dbReference type="BioGRID" id="17086">
    <property type="interactions" value="1"/>
</dbReference>
<dbReference type="FunCoup" id="O49841">
    <property type="interactions" value="3449"/>
</dbReference>
<dbReference type="IntAct" id="O49841">
    <property type="interactions" value="1"/>
</dbReference>
<dbReference type="STRING" id="3702.O49841"/>
<dbReference type="iPTMnet" id="O49841"/>
<dbReference type="PaxDb" id="3702-AT5G03530.1"/>
<dbReference type="ProteomicsDB" id="236389"/>
<dbReference type="EnsemblPlants" id="AT5G03530.1">
    <property type="protein sequence ID" value="AT5G03530.1"/>
    <property type="gene ID" value="AT5G03530"/>
</dbReference>
<dbReference type="EnsemblPlants" id="AT5G03530.2">
    <property type="protein sequence ID" value="AT5G03530.2"/>
    <property type="gene ID" value="AT5G03530"/>
</dbReference>
<dbReference type="GeneID" id="831810"/>
<dbReference type="Gramene" id="AT5G03530.1">
    <property type="protein sequence ID" value="AT5G03530.1"/>
    <property type="gene ID" value="AT5G03530"/>
</dbReference>
<dbReference type="Gramene" id="AT5G03530.2">
    <property type="protein sequence ID" value="AT5G03530.2"/>
    <property type="gene ID" value="AT5G03530"/>
</dbReference>
<dbReference type="KEGG" id="ath:AT5G03530"/>
<dbReference type="Araport" id="AT5G03530"/>
<dbReference type="TAIR" id="AT5G03530">
    <property type="gene designation" value="RABC2A"/>
</dbReference>
<dbReference type="eggNOG" id="KOG0080">
    <property type="taxonomic scope" value="Eukaryota"/>
</dbReference>
<dbReference type="HOGENOM" id="CLU_041217_10_1_1"/>
<dbReference type="InParanoid" id="O49841"/>
<dbReference type="OMA" id="VYDVSCQ"/>
<dbReference type="OrthoDB" id="9989112at2759"/>
<dbReference type="PhylomeDB" id="O49841"/>
<dbReference type="PRO" id="PR:O49841"/>
<dbReference type="Proteomes" id="UP000006548">
    <property type="component" value="Chromosome 5"/>
</dbReference>
<dbReference type="ExpressionAtlas" id="O49841">
    <property type="expression patterns" value="baseline and differential"/>
</dbReference>
<dbReference type="GO" id="GO:0005777">
    <property type="term" value="C:peroxisome"/>
    <property type="evidence" value="ECO:0000314"/>
    <property type="project" value="TAIR"/>
</dbReference>
<dbReference type="GO" id="GO:0005886">
    <property type="term" value="C:plasma membrane"/>
    <property type="evidence" value="ECO:0007005"/>
    <property type="project" value="TAIR"/>
</dbReference>
<dbReference type="GO" id="GO:0005525">
    <property type="term" value="F:GTP binding"/>
    <property type="evidence" value="ECO:0007669"/>
    <property type="project" value="UniProtKB-KW"/>
</dbReference>
<dbReference type="GO" id="GO:0030742">
    <property type="term" value="F:GTP-dependent protein binding"/>
    <property type="evidence" value="ECO:0000353"/>
    <property type="project" value="TAIR"/>
</dbReference>
<dbReference type="GO" id="GO:0003924">
    <property type="term" value="F:GTPase activity"/>
    <property type="evidence" value="ECO:0007669"/>
    <property type="project" value="InterPro"/>
</dbReference>
<dbReference type="GO" id="GO:0080115">
    <property type="term" value="F:myosin XI tail binding"/>
    <property type="evidence" value="ECO:0000353"/>
    <property type="project" value="TAIR"/>
</dbReference>
<dbReference type="GO" id="GO:0015031">
    <property type="term" value="P:protein transport"/>
    <property type="evidence" value="ECO:0007669"/>
    <property type="project" value="UniProtKB-KW"/>
</dbReference>
<dbReference type="CDD" id="cd01863">
    <property type="entry name" value="Rab18"/>
    <property type="match status" value="1"/>
</dbReference>
<dbReference type="FunFam" id="3.40.50.300:FF:000456">
    <property type="entry name" value="Ras-related protein RABC1"/>
    <property type="match status" value="1"/>
</dbReference>
<dbReference type="Gene3D" id="3.40.50.300">
    <property type="entry name" value="P-loop containing nucleotide triphosphate hydrolases"/>
    <property type="match status" value="1"/>
</dbReference>
<dbReference type="InterPro" id="IPR027417">
    <property type="entry name" value="P-loop_NTPase"/>
</dbReference>
<dbReference type="InterPro" id="IPR050227">
    <property type="entry name" value="Rab"/>
</dbReference>
<dbReference type="InterPro" id="IPR025662">
    <property type="entry name" value="Sigma_54_int_dom_ATP-bd_1"/>
</dbReference>
<dbReference type="InterPro" id="IPR005225">
    <property type="entry name" value="Small_GTP-bd"/>
</dbReference>
<dbReference type="InterPro" id="IPR001806">
    <property type="entry name" value="Small_GTPase"/>
</dbReference>
<dbReference type="NCBIfam" id="TIGR00231">
    <property type="entry name" value="small_GTP"/>
    <property type="match status" value="1"/>
</dbReference>
<dbReference type="PANTHER" id="PTHR47977">
    <property type="entry name" value="RAS-RELATED PROTEIN RAB"/>
    <property type="match status" value="1"/>
</dbReference>
<dbReference type="Pfam" id="PF00071">
    <property type="entry name" value="Ras"/>
    <property type="match status" value="1"/>
</dbReference>
<dbReference type="PRINTS" id="PR00449">
    <property type="entry name" value="RASTRNSFRMNG"/>
</dbReference>
<dbReference type="SMART" id="SM00177">
    <property type="entry name" value="ARF"/>
    <property type="match status" value="1"/>
</dbReference>
<dbReference type="SMART" id="SM00175">
    <property type="entry name" value="RAB"/>
    <property type="match status" value="1"/>
</dbReference>
<dbReference type="SMART" id="SM00176">
    <property type="entry name" value="RAN"/>
    <property type="match status" value="1"/>
</dbReference>
<dbReference type="SMART" id="SM00173">
    <property type="entry name" value="RAS"/>
    <property type="match status" value="1"/>
</dbReference>
<dbReference type="SMART" id="SM00174">
    <property type="entry name" value="RHO"/>
    <property type="match status" value="1"/>
</dbReference>
<dbReference type="SUPFAM" id="SSF52540">
    <property type="entry name" value="P-loop containing nucleoside triphosphate hydrolases"/>
    <property type="match status" value="1"/>
</dbReference>
<dbReference type="PROSITE" id="PS51419">
    <property type="entry name" value="RAB"/>
    <property type="match status" value="1"/>
</dbReference>
<dbReference type="PROSITE" id="PS00675">
    <property type="entry name" value="SIGMA54_INTERACT_1"/>
    <property type="match status" value="1"/>
</dbReference>
<proteinExistence type="evidence at protein level"/>
<evidence type="ECO:0000250" key="1"/>
<evidence type="ECO:0000269" key="2">
    <source>
    </source>
</evidence>
<evidence type="ECO:0000305" key="3"/>
<reference key="1">
    <citation type="journal article" date="1997" name="Biochim. Biophys. Acta">
        <title>Molecular characterization of a cDNA encoding a novel small GTP-binding protein from Arabidopsis thaliana.</title>
        <authorList>
            <person name="Mikami K."/>
            <person name="Ichimura K."/>
            <person name="Iuch S."/>
            <person name="Yamaguchi-Shinozaki K."/>
            <person name="Shinozaki K."/>
        </authorList>
    </citation>
    <scope>NUCLEOTIDE SEQUENCE [MRNA]</scope>
</reference>
<reference key="2">
    <citation type="journal article" date="2000" name="Nature">
        <title>Sequence and analysis of chromosome 5 of the plant Arabidopsis thaliana.</title>
        <authorList>
            <person name="Tabata S."/>
            <person name="Kaneko T."/>
            <person name="Nakamura Y."/>
            <person name="Kotani H."/>
            <person name="Kato T."/>
            <person name="Asamizu E."/>
            <person name="Miyajima N."/>
            <person name="Sasamoto S."/>
            <person name="Kimura T."/>
            <person name="Hosouchi T."/>
            <person name="Kawashima K."/>
            <person name="Kohara M."/>
            <person name="Matsumoto M."/>
            <person name="Matsuno A."/>
            <person name="Muraki A."/>
            <person name="Nakayama S."/>
            <person name="Nakazaki N."/>
            <person name="Naruo K."/>
            <person name="Okumura S."/>
            <person name="Shinpo S."/>
            <person name="Takeuchi C."/>
            <person name="Wada T."/>
            <person name="Watanabe A."/>
            <person name="Yamada M."/>
            <person name="Yasuda M."/>
            <person name="Sato S."/>
            <person name="de la Bastide M."/>
            <person name="Huang E."/>
            <person name="Spiegel L."/>
            <person name="Gnoj L."/>
            <person name="O'Shaughnessy A."/>
            <person name="Preston R."/>
            <person name="Habermann K."/>
            <person name="Murray J."/>
            <person name="Johnson D."/>
            <person name="Rohlfing T."/>
            <person name="Nelson J."/>
            <person name="Stoneking T."/>
            <person name="Pepin K."/>
            <person name="Spieth J."/>
            <person name="Sekhon M."/>
            <person name="Armstrong J."/>
            <person name="Becker M."/>
            <person name="Belter E."/>
            <person name="Cordum H."/>
            <person name="Cordes M."/>
            <person name="Courtney L."/>
            <person name="Courtney W."/>
            <person name="Dante M."/>
            <person name="Du H."/>
            <person name="Edwards J."/>
            <person name="Fryman J."/>
            <person name="Haakensen B."/>
            <person name="Lamar E."/>
            <person name="Latreille P."/>
            <person name="Leonard S."/>
            <person name="Meyer R."/>
            <person name="Mulvaney E."/>
            <person name="Ozersky P."/>
            <person name="Riley A."/>
            <person name="Strowmatt C."/>
            <person name="Wagner-McPherson C."/>
            <person name="Wollam A."/>
            <person name="Yoakum M."/>
            <person name="Bell M."/>
            <person name="Dedhia N."/>
            <person name="Parnell L."/>
            <person name="Shah R."/>
            <person name="Rodriguez M."/>
            <person name="Hoon See L."/>
            <person name="Vil D."/>
            <person name="Baker J."/>
            <person name="Kirchoff K."/>
            <person name="Toth K."/>
            <person name="King L."/>
            <person name="Bahret A."/>
            <person name="Miller B."/>
            <person name="Marra M.A."/>
            <person name="Martienssen R."/>
            <person name="McCombie W.R."/>
            <person name="Wilson R.K."/>
            <person name="Murphy G."/>
            <person name="Bancroft I."/>
            <person name="Volckaert G."/>
            <person name="Wambutt R."/>
            <person name="Duesterhoeft A."/>
            <person name="Stiekema W."/>
            <person name="Pohl T."/>
            <person name="Entian K.-D."/>
            <person name="Terryn N."/>
            <person name="Hartley N."/>
            <person name="Bent E."/>
            <person name="Johnson S."/>
            <person name="Langham S.-A."/>
            <person name="McCullagh B."/>
            <person name="Robben J."/>
            <person name="Grymonprez B."/>
            <person name="Zimmermann W."/>
            <person name="Ramsperger U."/>
            <person name="Wedler H."/>
            <person name="Balke K."/>
            <person name="Wedler E."/>
            <person name="Peters S."/>
            <person name="van Staveren M."/>
            <person name="Dirkse W."/>
            <person name="Mooijman P."/>
            <person name="Klein Lankhorst R."/>
            <person name="Weitzenegger T."/>
            <person name="Bothe G."/>
            <person name="Rose M."/>
            <person name="Hauf J."/>
            <person name="Berneiser S."/>
            <person name="Hempel S."/>
            <person name="Feldpausch M."/>
            <person name="Lamberth S."/>
            <person name="Villarroel R."/>
            <person name="Gielen J."/>
            <person name="Ardiles W."/>
            <person name="Bents O."/>
            <person name="Lemcke K."/>
            <person name="Kolesov G."/>
            <person name="Mayer K.F.X."/>
            <person name="Rudd S."/>
            <person name="Schoof H."/>
            <person name="Schueller C."/>
            <person name="Zaccaria P."/>
            <person name="Mewes H.-W."/>
            <person name="Bevan M."/>
            <person name="Fransz P.F."/>
        </authorList>
    </citation>
    <scope>NUCLEOTIDE SEQUENCE [LARGE SCALE GENOMIC DNA]</scope>
    <source>
        <strain>cv. Columbia</strain>
    </source>
</reference>
<reference key="3">
    <citation type="journal article" date="2017" name="Plant J.">
        <title>Araport11: a complete reannotation of the Arabidopsis thaliana reference genome.</title>
        <authorList>
            <person name="Cheng C.Y."/>
            <person name="Krishnakumar V."/>
            <person name="Chan A.P."/>
            <person name="Thibaud-Nissen F."/>
            <person name="Schobel S."/>
            <person name="Town C.D."/>
        </authorList>
    </citation>
    <scope>GENOME REANNOTATION</scope>
    <source>
        <strain>cv. Columbia</strain>
    </source>
</reference>
<reference key="4">
    <citation type="journal article" date="2002" name="Science">
        <title>Functional annotation of a full-length Arabidopsis cDNA collection.</title>
        <authorList>
            <person name="Seki M."/>
            <person name="Narusaka M."/>
            <person name="Kamiya A."/>
            <person name="Ishida J."/>
            <person name="Satou M."/>
            <person name="Sakurai T."/>
            <person name="Nakajima M."/>
            <person name="Enju A."/>
            <person name="Akiyama K."/>
            <person name="Oono Y."/>
            <person name="Muramatsu M."/>
            <person name="Hayashizaki Y."/>
            <person name="Kawai J."/>
            <person name="Carninci P."/>
            <person name="Itoh M."/>
            <person name="Ishii Y."/>
            <person name="Arakawa T."/>
            <person name="Shibata K."/>
            <person name="Shinagawa A."/>
            <person name="Shinozaki K."/>
        </authorList>
    </citation>
    <scope>NUCLEOTIDE SEQUENCE [LARGE SCALE MRNA]</scope>
    <source>
        <strain>cv. Columbia</strain>
    </source>
</reference>
<reference key="5">
    <citation type="journal article" date="2003" name="Science">
        <title>Empirical analysis of transcriptional activity in the Arabidopsis genome.</title>
        <authorList>
            <person name="Yamada K."/>
            <person name="Lim J."/>
            <person name="Dale J.M."/>
            <person name="Chen H."/>
            <person name="Shinn P."/>
            <person name="Palm C.J."/>
            <person name="Southwick A.M."/>
            <person name="Wu H.C."/>
            <person name="Kim C.J."/>
            <person name="Nguyen M."/>
            <person name="Pham P.K."/>
            <person name="Cheuk R.F."/>
            <person name="Karlin-Newmann G."/>
            <person name="Liu S.X."/>
            <person name="Lam B."/>
            <person name="Sakano H."/>
            <person name="Wu T."/>
            <person name="Yu G."/>
            <person name="Miranda M."/>
            <person name="Quach H.L."/>
            <person name="Tripp M."/>
            <person name="Chang C.H."/>
            <person name="Lee J.M."/>
            <person name="Toriumi M.J."/>
            <person name="Chan M.M."/>
            <person name="Tang C.C."/>
            <person name="Onodera C.S."/>
            <person name="Deng J.M."/>
            <person name="Akiyama K."/>
            <person name="Ansari Y."/>
            <person name="Arakawa T."/>
            <person name="Banh J."/>
            <person name="Banno F."/>
            <person name="Bowser L."/>
            <person name="Brooks S.Y."/>
            <person name="Carninci P."/>
            <person name="Chao Q."/>
            <person name="Choy N."/>
            <person name="Enju A."/>
            <person name="Goldsmith A.D."/>
            <person name="Gurjal M."/>
            <person name="Hansen N.F."/>
            <person name="Hayashizaki Y."/>
            <person name="Johnson-Hopson C."/>
            <person name="Hsuan V.W."/>
            <person name="Iida K."/>
            <person name="Karnes M."/>
            <person name="Khan S."/>
            <person name="Koesema E."/>
            <person name="Ishida J."/>
            <person name="Jiang P.X."/>
            <person name="Jones T."/>
            <person name="Kawai J."/>
            <person name="Kamiya A."/>
            <person name="Meyers C."/>
            <person name="Nakajima M."/>
            <person name="Narusaka M."/>
            <person name="Seki M."/>
            <person name="Sakurai T."/>
            <person name="Satou M."/>
            <person name="Tamse R."/>
            <person name="Vaysberg M."/>
            <person name="Wallender E.K."/>
            <person name="Wong C."/>
            <person name="Yamamura Y."/>
            <person name="Yuan S."/>
            <person name="Shinozaki K."/>
            <person name="Davis R.W."/>
            <person name="Theologis A."/>
            <person name="Ecker J.R."/>
        </authorList>
    </citation>
    <scope>NUCLEOTIDE SEQUENCE [LARGE SCALE MRNA]</scope>
    <source>
        <strain>cv. Columbia</strain>
    </source>
</reference>
<reference key="6">
    <citation type="journal article" date="2003" name="Plant Physiol.">
        <title>Analysis of the small GTPase gene superfamily of Arabidopsis.</title>
        <authorList>
            <person name="Vernoud V."/>
            <person name="Horton A.C."/>
            <person name="Yang Z."/>
            <person name="Nielsen E."/>
        </authorList>
    </citation>
    <scope>GENE FAMILY</scope>
    <scope>NOMENCLATURE</scope>
</reference>
<reference key="7">
    <citation type="journal article" date="2008" name="J. Exp. Bot.">
        <title>An isoform of Arabidopsis myosin XI interacts with small GTPases in its C-terminal tail region.</title>
        <authorList>
            <person name="Hashimoto K."/>
            <person name="Igarashi H."/>
            <person name="Mano S."/>
            <person name="Takenaka C."/>
            <person name="Shiina T."/>
            <person name="Yamaguchi M."/>
            <person name="Demura T."/>
            <person name="Nishimura M."/>
            <person name="Shimmen T."/>
            <person name="Yokota E."/>
        </authorList>
    </citation>
    <scope>INTERACTION WITH XI-2/MYA2</scope>
    <scope>SUBCELLULAR LOCATION</scope>
</reference>
<name>RAC2A_ARATH</name>
<sequence>MGSSSGQSGYDLSFKILLIGDSGVGKSSLLVSFISSSVEDLAPTIGVDFKIKQLTVGGKRLKLTIWDTAGQERFRTLTSSYYRGAQGIILVYDVTRRETFTNLVDVWGKEIELYSTNQECVRMLVGNKVDRESERGVSREEGIALAKELNCMFLECSARTRQNVEQCFEELALKIMEVPSLLEEGSSAVKRNILKQKPEHQTNTQSGCCS</sequence>
<accession>O49841</accession>
<feature type="chain" id="PRO_0000407358" description="Ras-related protein RABC2a">
    <location>
        <begin position="1"/>
        <end position="210"/>
    </location>
</feature>
<feature type="short sequence motif" description="Effector region" evidence="1">
    <location>
        <begin position="41"/>
        <end position="49"/>
    </location>
</feature>
<feature type="binding site" evidence="1">
    <location>
        <begin position="20"/>
        <end position="27"/>
    </location>
    <ligand>
        <name>GTP</name>
        <dbReference type="ChEBI" id="CHEBI:37565"/>
    </ligand>
</feature>
<feature type="binding site" evidence="1">
    <location>
        <begin position="67"/>
        <end position="71"/>
    </location>
    <ligand>
        <name>GTP</name>
        <dbReference type="ChEBI" id="CHEBI:37565"/>
    </ligand>
</feature>
<feature type="binding site" evidence="1">
    <location>
        <begin position="127"/>
        <end position="130"/>
    </location>
    <ligand>
        <name>GTP</name>
        <dbReference type="ChEBI" id="CHEBI:37565"/>
    </ligand>
</feature>
<feature type="binding site" evidence="1">
    <location>
        <begin position="157"/>
        <end position="158"/>
    </location>
    <ligand>
        <name>GTP</name>
        <dbReference type="ChEBI" id="CHEBI:37565"/>
    </ligand>
</feature>
<feature type="lipid moiety-binding region" description="S-geranylgeranyl cysteine" evidence="1">
    <location>
        <position position="208"/>
    </location>
</feature>
<feature type="lipid moiety-binding region" description="S-geranylgeranyl cysteine" evidence="1">
    <location>
        <position position="209"/>
    </location>
</feature>